<organism>
    <name type="scientific">Escherichia coli (strain UTI89 / UPEC)</name>
    <dbReference type="NCBI Taxonomy" id="364106"/>
    <lineage>
        <taxon>Bacteria</taxon>
        <taxon>Pseudomonadati</taxon>
        <taxon>Pseudomonadota</taxon>
        <taxon>Gammaproteobacteria</taxon>
        <taxon>Enterobacterales</taxon>
        <taxon>Enterobacteriaceae</taxon>
        <taxon>Escherichia</taxon>
    </lineage>
</organism>
<reference key="1">
    <citation type="journal article" date="2006" name="Proc. Natl. Acad. Sci. U.S.A.">
        <title>Identification of genes subject to positive selection in uropathogenic strains of Escherichia coli: a comparative genomics approach.</title>
        <authorList>
            <person name="Chen S.L."/>
            <person name="Hung C.-S."/>
            <person name="Xu J."/>
            <person name="Reigstad C.S."/>
            <person name="Magrini V."/>
            <person name="Sabo A."/>
            <person name="Blasiar D."/>
            <person name="Bieri T."/>
            <person name="Meyer R.R."/>
            <person name="Ozersky P."/>
            <person name="Armstrong J.R."/>
            <person name="Fulton R.S."/>
            <person name="Latreille J.P."/>
            <person name="Spieth J."/>
            <person name="Hooton T.M."/>
            <person name="Mardis E.R."/>
            <person name="Hultgren S.J."/>
            <person name="Gordon J.I."/>
        </authorList>
    </citation>
    <scope>NUCLEOTIDE SEQUENCE [LARGE SCALE GENOMIC DNA]</scope>
    <source>
        <strain>UTI89 / UPEC</strain>
    </source>
</reference>
<feature type="chain" id="PRO_0000366991" description="Beta-galactosidase">
    <location>
        <begin position="1"/>
        <end position="1024"/>
    </location>
</feature>
<feature type="active site" description="Proton donor" evidence="1">
    <location>
        <position position="462"/>
    </location>
</feature>
<feature type="active site" description="Nucleophile" evidence="1">
    <location>
        <position position="538"/>
    </location>
</feature>
<feature type="binding site" evidence="1">
    <location>
        <position position="103"/>
    </location>
    <ligand>
        <name>substrate</name>
    </ligand>
</feature>
<feature type="binding site" evidence="1">
    <location>
        <position position="202"/>
    </location>
    <ligand>
        <name>Na(+)</name>
        <dbReference type="ChEBI" id="CHEBI:29101"/>
    </ligand>
</feature>
<feature type="binding site" evidence="1">
    <location>
        <position position="202"/>
    </location>
    <ligand>
        <name>substrate</name>
    </ligand>
</feature>
<feature type="binding site" evidence="1">
    <location>
        <position position="417"/>
    </location>
    <ligand>
        <name>Mg(2+)</name>
        <dbReference type="ChEBI" id="CHEBI:18420"/>
        <label>1</label>
    </ligand>
</feature>
<feature type="binding site" evidence="1">
    <location>
        <position position="419"/>
    </location>
    <ligand>
        <name>Mg(2+)</name>
        <dbReference type="ChEBI" id="CHEBI:18420"/>
        <label>1</label>
    </ligand>
</feature>
<feature type="binding site" evidence="1">
    <location>
        <position position="462"/>
    </location>
    <ligand>
        <name>Mg(2+)</name>
        <dbReference type="ChEBI" id="CHEBI:18420"/>
        <label>1</label>
    </ligand>
</feature>
<feature type="binding site" evidence="1">
    <location>
        <position position="462"/>
    </location>
    <ligand>
        <name>substrate</name>
    </ligand>
</feature>
<feature type="binding site" evidence="1">
    <location>
        <begin position="538"/>
        <end position="541"/>
    </location>
    <ligand>
        <name>substrate</name>
    </ligand>
</feature>
<feature type="binding site" evidence="1">
    <location>
        <position position="598"/>
    </location>
    <ligand>
        <name>Mg(2+)</name>
        <dbReference type="ChEBI" id="CHEBI:18420"/>
        <label>2</label>
    </ligand>
</feature>
<feature type="binding site" evidence="1">
    <location>
        <position position="602"/>
    </location>
    <ligand>
        <name>Na(+)</name>
        <dbReference type="ChEBI" id="CHEBI:29101"/>
    </ligand>
</feature>
<feature type="binding site" evidence="1">
    <location>
        <position position="605"/>
    </location>
    <ligand>
        <name>Na(+)</name>
        <dbReference type="ChEBI" id="CHEBI:29101"/>
    </ligand>
</feature>
<feature type="binding site" evidence="1">
    <location>
        <position position="605"/>
    </location>
    <ligand>
        <name>substrate</name>
    </ligand>
</feature>
<feature type="binding site" evidence="1">
    <location>
        <position position="1000"/>
    </location>
    <ligand>
        <name>substrate</name>
    </ligand>
</feature>
<feature type="site" description="Transition state stabilizer" evidence="1">
    <location>
        <position position="358"/>
    </location>
</feature>
<feature type="site" description="Transition state stabilizer" evidence="1">
    <location>
        <position position="392"/>
    </location>
</feature>
<name>BGAL_ECOUT</name>
<gene>
    <name evidence="1" type="primary">lacZ</name>
    <name type="ordered locus">UTI89_C0371</name>
</gene>
<comment type="catalytic activity">
    <reaction evidence="1">
        <text>Hydrolysis of terminal non-reducing beta-D-galactose residues in beta-D-galactosides.</text>
        <dbReference type="EC" id="3.2.1.23"/>
    </reaction>
</comment>
<comment type="cofactor">
    <cofactor evidence="1">
        <name>Mg(2+)</name>
        <dbReference type="ChEBI" id="CHEBI:18420"/>
    </cofactor>
    <text evidence="1">Binds 2 magnesium ions per monomer.</text>
</comment>
<comment type="cofactor">
    <cofactor evidence="1">
        <name>Na(+)</name>
        <dbReference type="ChEBI" id="CHEBI:29101"/>
    </cofactor>
    <text evidence="1">Binds 1 sodium ion per monomer.</text>
</comment>
<comment type="subunit">
    <text evidence="1">Homotetramer.</text>
</comment>
<comment type="similarity">
    <text evidence="1">Belongs to the glycosyl hydrolase 2 family.</text>
</comment>
<accession>Q1RFJ2</accession>
<protein>
    <recommendedName>
        <fullName evidence="1">Beta-galactosidase</fullName>
        <shortName evidence="1">Beta-gal</shortName>
        <ecNumber evidence="1">3.2.1.23</ecNumber>
    </recommendedName>
    <alternativeName>
        <fullName evidence="1">Lactase</fullName>
    </alternativeName>
</protein>
<proteinExistence type="inferred from homology"/>
<sequence>MTMITDSLAVVLQRRDWENPGVTQLNRLAAHPPFASWRNSEEARTDRPSQQLRSLNGEWRFAWFPAPEAVPESWLECDLPDADTVVVPSNWQMHGYDAPIYTNVTYPITVNPPFVPAENPTGCYSLTFNIDESWLQEGQTRIIFDGVNSAFHLWCNGRWVGYGQDSRLPSEFDLSAFLHAGENRLAVMVLRWSDGSYLEDQDMWRMSGIFRDVSLLHKPTTQISDFQVTTRFNDDFSRAVLEAEVQMYGELRDELRVTVSLWQGETQVASGTAPFGGEIIDERGGYADRVTLRLNVENPELWSAEIPNLYRAVVELHTADGTLIEAEACDVGFREVRIENGLLLLNGKPLLIRGVNRHEHHPLHGQVMDEQTMVQDILLMKQNNFNAVRCSHYPNHPLWYTLCDRYGLYVVDEANIETHGMVPMNRLTDDPRWLPAMSERVTRMVQRDRNHPSVIIWSLGNESGHGANHDALYRWIKSVDPSRPVQYEGGGADTTATDIICPMYARVDEDQPFPAVPKWSIKKWLSLPGEMRPLILCEYAHAMGNSLGGFAKYWQAFRQYPRLQGGFVWDWVDQSLIKYDENGNPWSAYGGDFGDTPNDRQFCMNGLVFADRTPHPALTEAKHQQQFFQFRLSGRTIEVTSEYLFRHSDNEFLHWMVALDGKPLASGEVPLDVGPQGKQLIELPELPQPESAGQLWLTVRVVQPNATAWSEAGHISAWQQWRLAENLSVTLPSASHAIPQLTTSGTDFCIELGNKRWQFNRQSGFLSQMWIGDEKQLLTPLRDQFTRAPLDNDIGVSEATRIDPNAWVERWKAAGHYQAEAALLQCTADTLADAVLITTAHAWQHQGKTLFISRKTYRIDGHGEMVINVDVAVASDTPHPARIGLTCQLAQVSERVNWLGLGPQENYPDRLTAACFDRWDLPLSDMYTPYVFPSENGLRCGTRELNYGPHQWRGDFQFNISRYSQQQLMETSHRHLLHAEEGTWLNIDGFHMGIGGDDSWSPSVSAEFQLSAGRYHYQLVWCQK</sequence>
<keyword id="KW-0326">Glycosidase</keyword>
<keyword id="KW-0378">Hydrolase</keyword>
<keyword id="KW-0460">Magnesium</keyword>
<keyword id="KW-0479">Metal-binding</keyword>
<keyword id="KW-0915">Sodium</keyword>
<evidence type="ECO:0000255" key="1">
    <source>
        <dbReference type="HAMAP-Rule" id="MF_01687"/>
    </source>
</evidence>
<dbReference type="EC" id="3.2.1.23" evidence="1"/>
<dbReference type="EMBL" id="CP000243">
    <property type="protein sequence ID" value="ABE05872.1"/>
    <property type="molecule type" value="Genomic_DNA"/>
</dbReference>
<dbReference type="RefSeq" id="WP_000177872.1">
    <property type="nucleotide sequence ID" value="NZ_CP064825.1"/>
</dbReference>
<dbReference type="SMR" id="Q1RFJ2"/>
<dbReference type="CAZy" id="GH2">
    <property type="family name" value="Glycoside Hydrolase Family 2"/>
</dbReference>
<dbReference type="KEGG" id="eci:UTI89_C0371"/>
<dbReference type="HOGENOM" id="CLU_002346_0_2_6"/>
<dbReference type="Proteomes" id="UP000001952">
    <property type="component" value="Chromosome"/>
</dbReference>
<dbReference type="GO" id="GO:0009341">
    <property type="term" value="C:beta-galactosidase complex"/>
    <property type="evidence" value="ECO:0007669"/>
    <property type="project" value="InterPro"/>
</dbReference>
<dbReference type="GO" id="GO:0004565">
    <property type="term" value="F:beta-galactosidase activity"/>
    <property type="evidence" value="ECO:0007669"/>
    <property type="project" value="UniProtKB-EC"/>
</dbReference>
<dbReference type="GO" id="GO:0030246">
    <property type="term" value="F:carbohydrate binding"/>
    <property type="evidence" value="ECO:0007669"/>
    <property type="project" value="InterPro"/>
</dbReference>
<dbReference type="GO" id="GO:0000287">
    <property type="term" value="F:magnesium ion binding"/>
    <property type="evidence" value="ECO:0007669"/>
    <property type="project" value="UniProtKB-UniRule"/>
</dbReference>
<dbReference type="GO" id="GO:0005990">
    <property type="term" value="P:lactose catabolic process"/>
    <property type="evidence" value="ECO:0007669"/>
    <property type="project" value="TreeGrafter"/>
</dbReference>
<dbReference type="FunFam" id="2.60.120.260:FF:000058">
    <property type="entry name" value="Beta-galactosidase"/>
    <property type="match status" value="1"/>
</dbReference>
<dbReference type="FunFam" id="2.60.40.10:FF:000680">
    <property type="entry name" value="Beta-galactosidase"/>
    <property type="match status" value="1"/>
</dbReference>
<dbReference type="FunFam" id="2.60.40.10:FF:000850">
    <property type="entry name" value="Beta-galactosidase"/>
    <property type="match status" value="1"/>
</dbReference>
<dbReference type="FunFam" id="2.70.98.10:FF:000006">
    <property type="entry name" value="Beta-galactosidase"/>
    <property type="match status" value="1"/>
</dbReference>
<dbReference type="FunFam" id="3.20.20.80:FF:000018">
    <property type="entry name" value="Beta-galactosidase"/>
    <property type="match status" value="1"/>
</dbReference>
<dbReference type="Gene3D" id="2.70.98.10">
    <property type="match status" value="1"/>
</dbReference>
<dbReference type="Gene3D" id="2.60.120.260">
    <property type="entry name" value="Galactose-binding domain-like"/>
    <property type="match status" value="1"/>
</dbReference>
<dbReference type="Gene3D" id="3.20.20.80">
    <property type="entry name" value="Glycosidases"/>
    <property type="match status" value="1"/>
</dbReference>
<dbReference type="Gene3D" id="2.60.40.10">
    <property type="entry name" value="Immunoglobulins"/>
    <property type="match status" value="2"/>
</dbReference>
<dbReference type="HAMAP" id="MF_01687">
    <property type="entry name" value="Beta_gal"/>
    <property type="match status" value="1"/>
</dbReference>
<dbReference type="InterPro" id="IPR004199">
    <property type="entry name" value="B-gal_small/dom_5"/>
</dbReference>
<dbReference type="InterPro" id="IPR050347">
    <property type="entry name" value="Bact_Beta-galactosidase"/>
</dbReference>
<dbReference type="InterPro" id="IPR036156">
    <property type="entry name" value="Beta-gal/glucu_dom_sf"/>
</dbReference>
<dbReference type="InterPro" id="IPR011013">
    <property type="entry name" value="Gal_mutarotase_sf_dom"/>
</dbReference>
<dbReference type="InterPro" id="IPR008979">
    <property type="entry name" value="Galactose-bd-like_sf"/>
</dbReference>
<dbReference type="InterPro" id="IPR014718">
    <property type="entry name" value="GH-type_carb-bd"/>
</dbReference>
<dbReference type="InterPro" id="IPR006101">
    <property type="entry name" value="Glyco_hydro_2"/>
</dbReference>
<dbReference type="InterPro" id="IPR023232">
    <property type="entry name" value="Glyco_hydro_2_AS"/>
</dbReference>
<dbReference type="InterPro" id="IPR023933">
    <property type="entry name" value="Glyco_hydro_2_beta_Galsidase"/>
</dbReference>
<dbReference type="InterPro" id="IPR006103">
    <property type="entry name" value="Glyco_hydro_2_cat"/>
</dbReference>
<dbReference type="InterPro" id="IPR023230">
    <property type="entry name" value="Glyco_hydro_2_CS"/>
</dbReference>
<dbReference type="InterPro" id="IPR006102">
    <property type="entry name" value="Glyco_hydro_2_Ig-like"/>
</dbReference>
<dbReference type="InterPro" id="IPR006104">
    <property type="entry name" value="Glyco_hydro_2_N"/>
</dbReference>
<dbReference type="InterPro" id="IPR017853">
    <property type="entry name" value="Glycoside_hydrolase_SF"/>
</dbReference>
<dbReference type="InterPro" id="IPR013783">
    <property type="entry name" value="Ig-like_fold"/>
</dbReference>
<dbReference type="InterPro" id="IPR032312">
    <property type="entry name" value="LacZ_4"/>
</dbReference>
<dbReference type="NCBIfam" id="NF007074">
    <property type="entry name" value="PRK09525.1"/>
    <property type="match status" value="1"/>
</dbReference>
<dbReference type="PANTHER" id="PTHR46323">
    <property type="entry name" value="BETA-GALACTOSIDASE"/>
    <property type="match status" value="1"/>
</dbReference>
<dbReference type="PANTHER" id="PTHR46323:SF2">
    <property type="entry name" value="BETA-GALACTOSIDASE"/>
    <property type="match status" value="1"/>
</dbReference>
<dbReference type="Pfam" id="PF02929">
    <property type="entry name" value="Bgal_small_N"/>
    <property type="match status" value="1"/>
</dbReference>
<dbReference type="Pfam" id="PF00703">
    <property type="entry name" value="Glyco_hydro_2"/>
    <property type="match status" value="1"/>
</dbReference>
<dbReference type="Pfam" id="PF02836">
    <property type="entry name" value="Glyco_hydro_2_C"/>
    <property type="match status" value="1"/>
</dbReference>
<dbReference type="Pfam" id="PF02837">
    <property type="entry name" value="Glyco_hydro_2_N"/>
    <property type="match status" value="1"/>
</dbReference>
<dbReference type="Pfam" id="PF16353">
    <property type="entry name" value="LacZ_4"/>
    <property type="match status" value="1"/>
</dbReference>
<dbReference type="PRINTS" id="PR00132">
    <property type="entry name" value="GLHYDRLASE2"/>
</dbReference>
<dbReference type="SMART" id="SM01038">
    <property type="entry name" value="Bgal_small_N"/>
    <property type="match status" value="1"/>
</dbReference>
<dbReference type="SUPFAM" id="SSF51445">
    <property type="entry name" value="(Trans)glycosidases"/>
    <property type="match status" value="1"/>
</dbReference>
<dbReference type="SUPFAM" id="SSF49303">
    <property type="entry name" value="beta-Galactosidase/glucuronidase domain"/>
    <property type="match status" value="2"/>
</dbReference>
<dbReference type="SUPFAM" id="SSF74650">
    <property type="entry name" value="Galactose mutarotase-like"/>
    <property type="match status" value="1"/>
</dbReference>
<dbReference type="SUPFAM" id="SSF49785">
    <property type="entry name" value="Galactose-binding domain-like"/>
    <property type="match status" value="1"/>
</dbReference>
<dbReference type="PROSITE" id="PS00719">
    <property type="entry name" value="GLYCOSYL_HYDROL_F2_1"/>
    <property type="match status" value="1"/>
</dbReference>
<dbReference type="PROSITE" id="PS00608">
    <property type="entry name" value="GLYCOSYL_HYDROL_F2_2"/>
    <property type="match status" value="1"/>
</dbReference>